<proteinExistence type="evidence at protein level"/>
<name>MD10B_ARATH</name>
<evidence type="ECO:0000256" key="1">
    <source>
        <dbReference type="SAM" id="MobiDB-lite"/>
    </source>
</evidence>
<evidence type="ECO:0000269" key="2">
    <source>
    </source>
</evidence>
<evidence type="ECO:0000269" key="3">
    <source>
    </source>
</evidence>
<evidence type="ECO:0000303" key="4">
    <source>
    </source>
</evidence>
<evidence type="ECO:0000305" key="5"/>
<gene>
    <name type="primary">MED10B</name>
    <name type="synonym">MED10_1</name>
    <name type="ordered locus">At1g26665</name>
    <name type="ORF">T24P13.4</name>
</gene>
<protein>
    <recommendedName>
        <fullName>Mediator of RNA polymerase II transcription subunit 10b</fullName>
    </recommendedName>
</protein>
<comment type="function">
    <text>Component of the Mediator complex, a coactivator involved in the regulated transcription of nearly all RNA polymerase II-dependent genes. Mediator functions as a bridge to convey information from gene-specific regulatory proteins to the basal RNA polymerase II transcription machinery. The Mediator complex, having a compact conformation in its free form, is recruited to promoters by direct interactions with regulatory proteins and serves for the assembly of a functional preinitiation complex with RNA polymerase II and the general transcription factors.</text>
</comment>
<comment type="subunit">
    <text evidence="2 3">Component of the Mediator complex.</text>
</comment>
<comment type="interaction">
    <interactant intactId="EBI-1386239">
        <id>F4HPA7</id>
    </interactant>
    <interactant intactId="EBI-2119299">
        <id>Q94AI7</id>
        <label>TPL</label>
    </interactant>
    <organismsDiffer>false</organismsDiffer>
    <experiments>3</experiments>
</comment>
<comment type="subcellular location">
    <subcellularLocation>
        <location evidence="5">Nucleus</location>
    </subcellularLocation>
</comment>
<comment type="alternative products">
    <event type="alternative splicing"/>
    <isoform>
        <id>F4HPA7-1</id>
        <name>1</name>
        <sequence type="displayed"/>
    </isoform>
    <isoform>
        <id>F4HPA7-2</id>
        <name>2</name>
        <sequence type="described" ref="VSP_043990"/>
    </isoform>
</comment>
<comment type="similarity">
    <text evidence="5">Belongs to the Mediator complex subunit 10 family.</text>
</comment>
<comment type="sequence caution" evidence="5">
    <conflict type="erroneous gene model prediction">
        <sequence resource="EMBL-CDS" id="AAF87025"/>
    </conflict>
</comment>
<accession>F4HPA7</accession>
<accession>Q93WN1</accession>
<accession>Q9LQY6</accession>
<organism>
    <name type="scientific">Arabidopsis thaliana</name>
    <name type="common">Mouse-ear cress</name>
    <dbReference type="NCBI Taxonomy" id="3702"/>
    <lineage>
        <taxon>Eukaryota</taxon>
        <taxon>Viridiplantae</taxon>
        <taxon>Streptophyta</taxon>
        <taxon>Embryophyta</taxon>
        <taxon>Tracheophyta</taxon>
        <taxon>Spermatophyta</taxon>
        <taxon>Magnoliopsida</taxon>
        <taxon>eudicotyledons</taxon>
        <taxon>Gunneridae</taxon>
        <taxon>Pentapetalae</taxon>
        <taxon>rosids</taxon>
        <taxon>malvids</taxon>
        <taxon>Brassicales</taxon>
        <taxon>Brassicaceae</taxon>
        <taxon>Camelineae</taxon>
        <taxon>Arabidopsis</taxon>
    </lineage>
</organism>
<sequence>MDPTQNTSAGIGGSNGTIRYQTNDGTSTVTVADDSKENLSQVINSIEKTLGVLHQLHLTVTSFTPASQLHLLQRLNSLVMELDNMTKLSEKCNIQIPMEVLNLIDDGKNPDEFTKDVLNSCIARNQVTKGKTDAFKDLRKHILEELEQNFPDEVDMYREIRASSAAVTKRLAQSQSVLPNGDAKVKNEL</sequence>
<reference key="1">
    <citation type="journal article" date="2000" name="Nature">
        <title>Sequence and analysis of chromosome 1 of the plant Arabidopsis thaliana.</title>
        <authorList>
            <person name="Theologis A."/>
            <person name="Ecker J.R."/>
            <person name="Palm C.J."/>
            <person name="Federspiel N.A."/>
            <person name="Kaul S."/>
            <person name="White O."/>
            <person name="Alonso J."/>
            <person name="Altafi H."/>
            <person name="Araujo R."/>
            <person name="Bowman C.L."/>
            <person name="Brooks S.Y."/>
            <person name="Buehler E."/>
            <person name="Chan A."/>
            <person name="Chao Q."/>
            <person name="Chen H."/>
            <person name="Cheuk R.F."/>
            <person name="Chin C.W."/>
            <person name="Chung M.K."/>
            <person name="Conn L."/>
            <person name="Conway A.B."/>
            <person name="Conway A.R."/>
            <person name="Creasy T.H."/>
            <person name="Dewar K."/>
            <person name="Dunn P."/>
            <person name="Etgu P."/>
            <person name="Feldblyum T.V."/>
            <person name="Feng J.-D."/>
            <person name="Fong B."/>
            <person name="Fujii C.Y."/>
            <person name="Gill J.E."/>
            <person name="Goldsmith A.D."/>
            <person name="Haas B."/>
            <person name="Hansen N.F."/>
            <person name="Hughes B."/>
            <person name="Huizar L."/>
            <person name="Hunter J.L."/>
            <person name="Jenkins J."/>
            <person name="Johnson-Hopson C."/>
            <person name="Khan S."/>
            <person name="Khaykin E."/>
            <person name="Kim C.J."/>
            <person name="Koo H.L."/>
            <person name="Kremenetskaia I."/>
            <person name="Kurtz D.B."/>
            <person name="Kwan A."/>
            <person name="Lam B."/>
            <person name="Langin-Hooper S."/>
            <person name="Lee A."/>
            <person name="Lee J.M."/>
            <person name="Lenz C.A."/>
            <person name="Li J.H."/>
            <person name="Li Y.-P."/>
            <person name="Lin X."/>
            <person name="Liu S.X."/>
            <person name="Liu Z.A."/>
            <person name="Luros J.S."/>
            <person name="Maiti R."/>
            <person name="Marziali A."/>
            <person name="Militscher J."/>
            <person name="Miranda M."/>
            <person name="Nguyen M."/>
            <person name="Nierman W.C."/>
            <person name="Osborne B.I."/>
            <person name="Pai G."/>
            <person name="Peterson J."/>
            <person name="Pham P.K."/>
            <person name="Rizzo M."/>
            <person name="Rooney T."/>
            <person name="Rowley D."/>
            <person name="Sakano H."/>
            <person name="Salzberg S.L."/>
            <person name="Schwartz J.R."/>
            <person name="Shinn P."/>
            <person name="Southwick A.M."/>
            <person name="Sun H."/>
            <person name="Tallon L.J."/>
            <person name="Tambunga G."/>
            <person name="Toriumi M.J."/>
            <person name="Town C.D."/>
            <person name="Utterback T."/>
            <person name="Van Aken S."/>
            <person name="Vaysberg M."/>
            <person name="Vysotskaia V.S."/>
            <person name="Walker M."/>
            <person name="Wu D."/>
            <person name="Yu G."/>
            <person name="Fraser C.M."/>
            <person name="Venter J.C."/>
            <person name="Davis R.W."/>
        </authorList>
    </citation>
    <scope>NUCLEOTIDE SEQUENCE [LARGE SCALE GENOMIC DNA]</scope>
    <source>
        <strain>cv. Columbia</strain>
    </source>
</reference>
<reference key="2">
    <citation type="journal article" date="2017" name="Plant J.">
        <title>Araport11: a complete reannotation of the Arabidopsis thaliana reference genome.</title>
        <authorList>
            <person name="Cheng C.Y."/>
            <person name="Krishnakumar V."/>
            <person name="Chan A.P."/>
            <person name="Thibaud-Nissen F."/>
            <person name="Schobel S."/>
            <person name="Town C.D."/>
        </authorList>
    </citation>
    <scope>GENOME REANNOTATION</scope>
    <source>
        <strain>cv. Columbia</strain>
    </source>
</reference>
<reference key="3">
    <citation type="journal article" date="2003" name="Science">
        <title>Empirical analysis of transcriptional activity in the Arabidopsis genome.</title>
        <authorList>
            <person name="Yamada K."/>
            <person name="Lim J."/>
            <person name="Dale J.M."/>
            <person name="Chen H."/>
            <person name="Shinn P."/>
            <person name="Palm C.J."/>
            <person name="Southwick A.M."/>
            <person name="Wu H.C."/>
            <person name="Kim C.J."/>
            <person name="Nguyen M."/>
            <person name="Pham P.K."/>
            <person name="Cheuk R.F."/>
            <person name="Karlin-Newmann G."/>
            <person name="Liu S.X."/>
            <person name="Lam B."/>
            <person name="Sakano H."/>
            <person name="Wu T."/>
            <person name="Yu G."/>
            <person name="Miranda M."/>
            <person name="Quach H.L."/>
            <person name="Tripp M."/>
            <person name="Chang C.H."/>
            <person name="Lee J.M."/>
            <person name="Toriumi M.J."/>
            <person name="Chan M.M."/>
            <person name="Tang C.C."/>
            <person name="Onodera C.S."/>
            <person name="Deng J.M."/>
            <person name="Akiyama K."/>
            <person name="Ansari Y."/>
            <person name="Arakawa T."/>
            <person name="Banh J."/>
            <person name="Banno F."/>
            <person name="Bowser L."/>
            <person name="Brooks S.Y."/>
            <person name="Carninci P."/>
            <person name="Chao Q."/>
            <person name="Choy N."/>
            <person name="Enju A."/>
            <person name="Goldsmith A.D."/>
            <person name="Gurjal M."/>
            <person name="Hansen N.F."/>
            <person name="Hayashizaki Y."/>
            <person name="Johnson-Hopson C."/>
            <person name="Hsuan V.W."/>
            <person name="Iida K."/>
            <person name="Karnes M."/>
            <person name="Khan S."/>
            <person name="Koesema E."/>
            <person name="Ishida J."/>
            <person name="Jiang P.X."/>
            <person name="Jones T."/>
            <person name="Kawai J."/>
            <person name="Kamiya A."/>
            <person name="Meyers C."/>
            <person name="Nakajima M."/>
            <person name="Narusaka M."/>
            <person name="Seki M."/>
            <person name="Sakurai T."/>
            <person name="Satou M."/>
            <person name="Tamse R."/>
            <person name="Vaysberg M."/>
            <person name="Wallender E.K."/>
            <person name="Wong C."/>
            <person name="Yamamura Y."/>
            <person name="Yuan S."/>
            <person name="Shinozaki K."/>
            <person name="Davis R.W."/>
            <person name="Theologis A."/>
            <person name="Ecker J.R."/>
        </authorList>
    </citation>
    <scope>NUCLEOTIDE SEQUENCE [LARGE SCALE MRNA] (ISOFORM 2)</scope>
    <source>
        <strain>cv. Columbia</strain>
    </source>
</reference>
<reference key="4">
    <citation type="journal article" date="2007" name="Mol. Cell">
        <title>Purification of a plant mediator from Arabidopsis thaliana identifies PFT1 as the Med25 subunit.</title>
        <authorList>
            <person name="Baeckstroem S."/>
            <person name="Elfving N."/>
            <person name="Nilsson R."/>
            <person name="Wingsle G."/>
            <person name="Bjoerklund S."/>
        </authorList>
    </citation>
    <scope>IDENTIFICATION BY MASS SPECTROMETRY</scope>
    <scope>SUBUNIT</scope>
    <scope>NOMENCLATURE</scope>
</reference>
<reference key="5">
    <citation type="journal article" date="2011" name="Plant Physiol.">
        <title>The Mediator complex in plants: structure, phylogeny, and expression profiling of representative genes in a dicot (Arabidopsis) and a monocot (rice) during reproduction and abiotic stress.</title>
        <authorList>
            <person name="Mathur S."/>
            <person name="Vyas S."/>
            <person name="Kapoor S."/>
            <person name="Tyagi A.K."/>
        </authorList>
    </citation>
    <scope>IDENTIFICATION</scope>
    <scope>SUBUNIT</scope>
    <scope>NOMENCLATURE</scope>
</reference>
<dbReference type="EMBL" id="AC006535">
    <property type="protein sequence ID" value="AAF87025.1"/>
    <property type="status" value="ALT_SEQ"/>
    <property type="molecule type" value="Genomic_DNA"/>
</dbReference>
<dbReference type="EMBL" id="CP002684">
    <property type="protein sequence ID" value="AEE30717.1"/>
    <property type="molecule type" value="Genomic_DNA"/>
</dbReference>
<dbReference type="EMBL" id="CP002684">
    <property type="protein sequence ID" value="AEE30718.1"/>
    <property type="molecule type" value="Genomic_DNA"/>
</dbReference>
<dbReference type="EMBL" id="AF372912">
    <property type="protein sequence ID" value="AAK49628.1"/>
    <property type="molecule type" value="mRNA"/>
</dbReference>
<dbReference type="EMBL" id="AY057733">
    <property type="protein sequence ID" value="AAL15363.1"/>
    <property type="molecule type" value="mRNA"/>
</dbReference>
<dbReference type="PIR" id="F86393">
    <property type="entry name" value="F86393"/>
</dbReference>
<dbReference type="RefSeq" id="NP_564254.1">
    <molecule id="F4HPA7-2"/>
    <property type="nucleotide sequence ID" value="NM_102429.4"/>
</dbReference>
<dbReference type="RefSeq" id="NP_973916.1">
    <molecule id="F4HPA7-1"/>
    <property type="nucleotide sequence ID" value="NM_202187.2"/>
</dbReference>
<dbReference type="SMR" id="F4HPA7"/>
<dbReference type="FunCoup" id="F4HPA7">
    <property type="interactions" value="2815"/>
</dbReference>
<dbReference type="IntAct" id="F4HPA7">
    <property type="interactions" value="3"/>
</dbReference>
<dbReference type="STRING" id="3702.F4HPA7"/>
<dbReference type="iPTMnet" id="F4HPA7"/>
<dbReference type="PaxDb" id="3702-AT1G26665.1"/>
<dbReference type="ProteomicsDB" id="238766">
    <molecule id="F4HPA7-1"/>
</dbReference>
<dbReference type="EnsemblPlants" id="AT1G26665.1">
    <molecule id="F4HPA7-2"/>
    <property type="protein sequence ID" value="AT1G26665.1"/>
    <property type="gene ID" value="AT1G26665"/>
</dbReference>
<dbReference type="EnsemblPlants" id="AT1G26665.2">
    <molecule id="F4HPA7-1"/>
    <property type="protein sequence ID" value="AT1G26665.2"/>
    <property type="gene ID" value="AT1G26665"/>
</dbReference>
<dbReference type="GeneID" id="839207"/>
<dbReference type="Gramene" id="AT1G26665.1">
    <molecule id="F4HPA7-2"/>
    <property type="protein sequence ID" value="AT1G26665.1"/>
    <property type="gene ID" value="AT1G26665"/>
</dbReference>
<dbReference type="Gramene" id="AT1G26665.2">
    <molecule id="F4HPA7-1"/>
    <property type="protein sequence ID" value="AT1G26665.2"/>
    <property type="gene ID" value="AT1G26665"/>
</dbReference>
<dbReference type="KEGG" id="ath:AT1G26665"/>
<dbReference type="Araport" id="AT1G26665"/>
<dbReference type="TAIR" id="AT1G26665"/>
<dbReference type="eggNOG" id="KOG3046">
    <property type="taxonomic scope" value="Eukaryota"/>
</dbReference>
<dbReference type="InParanoid" id="F4HPA7"/>
<dbReference type="OMA" id="GCIARNQ"/>
<dbReference type="PhylomeDB" id="F4HPA7"/>
<dbReference type="PRO" id="PR:F4HPA7"/>
<dbReference type="Proteomes" id="UP000006548">
    <property type="component" value="Chromosome 1"/>
</dbReference>
<dbReference type="ExpressionAtlas" id="F4HPA7">
    <property type="expression patterns" value="baseline and differential"/>
</dbReference>
<dbReference type="GO" id="GO:0016592">
    <property type="term" value="C:mediator complex"/>
    <property type="evidence" value="ECO:0000314"/>
    <property type="project" value="UniProtKB"/>
</dbReference>
<dbReference type="GO" id="GO:0003712">
    <property type="term" value="F:transcription coregulator activity"/>
    <property type="evidence" value="ECO:0007669"/>
    <property type="project" value="InterPro"/>
</dbReference>
<dbReference type="GO" id="GO:0006357">
    <property type="term" value="P:regulation of transcription by RNA polymerase II"/>
    <property type="evidence" value="ECO:0007669"/>
    <property type="project" value="InterPro"/>
</dbReference>
<dbReference type="InterPro" id="IPR019145">
    <property type="entry name" value="Mediator_Med10"/>
</dbReference>
<dbReference type="PANTHER" id="PTHR13345">
    <property type="entry name" value="MEDIATOR OF RNA POLYMERASE II TRANSCRIPTION SUBUNIT 10"/>
    <property type="match status" value="1"/>
</dbReference>
<dbReference type="PANTHER" id="PTHR13345:SF14">
    <property type="entry name" value="MEDIATOR OF RNA POLYMERASE II TRANSCRIPTION SUBUNIT 10A-RELATED"/>
    <property type="match status" value="1"/>
</dbReference>
<dbReference type="Pfam" id="PF09748">
    <property type="entry name" value="Med10"/>
    <property type="match status" value="1"/>
</dbReference>
<feature type="chain" id="PRO_0000418115" description="Mediator of RNA polymerase II transcription subunit 10b">
    <location>
        <begin position="1"/>
        <end position="189"/>
    </location>
</feature>
<feature type="region of interest" description="Disordered" evidence="1">
    <location>
        <begin position="1"/>
        <end position="22"/>
    </location>
</feature>
<feature type="splice variant" id="VSP_043990" description="In isoform 2." evidence="4">
    <original>VT</original>
    <variation>EA</variation>
    <location>
        <begin position="167"/>
        <end position="168"/>
    </location>
</feature>
<keyword id="KW-0025">Alternative splicing</keyword>
<keyword id="KW-0539">Nucleus</keyword>
<keyword id="KW-1185">Reference proteome</keyword>
<keyword id="KW-0804">Transcription</keyword>
<keyword id="KW-0805">Transcription regulation</keyword>